<evidence type="ECO:0000250" key="1"/>
<evidence type="ECO:0000305" key="2"/>
<name>ATPAM_ORYSA</name>
<reference key="1">
    <citation type="journal article" date="2006" name="Plant Physiol.">
        <title>The rice mitochondrial genomes and their variations.</title>
        <authorList>
            <person name="Tian X."/>
            <person name="Zheng J."/>
            <person name="Hu S."/>
            <person name="Yu J."/>
        </authorList>
    </citation>
    <scope>NUCLEOTIDE SEQUENCE [GENOMIC DNA]</scope>
    <source>
        <strain>cv. PA64s</strain>
    </source>
</reference>
<sequence>MEFSPRAAELTTLLESRMTNFYTNFQVDEIGRVVSVGDGIARVYGLNEIQAGEMVEFASGVKGIALNLENENVGIVVFGSDTAIKEGDLVKRTGSIVDVPAGKAMLGRVVDALGVPIDGKGALSDHERRRVEVKAPGIIERKSVHEPMQTGLKAVDSLVPIGRGQRELIIGDRQTGKTAIAIDTILNQKQMNSRGTNESETLYCVYVAIGQKRSTVAQLVQILSEANALEYSILVAATASDPAPLQFLAPYSGCAMGEYFRDNGMHALIIYDDLSKQAVAYRQMSLLLRRPPGREAFPGDVFYLHSRLLERAAKRSDQTGAGSLTALPVIETQAGDVSAYIPTNVISITDGQICLETELFYRGIRPAINVGLSVSRVGSAAQLKAMKQVCGSLKLELAQYREVAAFAQFGSDLDAATQALLNRGARLTEVSKQPQYEPLPIEKQIVVIYAAVNGFCDRMPLDRISQYEKAILSTINPELLKSFNEKGGLTNERKIELDAFLKQTAKEIN</sequence>
<geneLocation type="mitochondrion"/>
<organism>
    <name type="scientific">Oryza sativa</name>
    <name type="common">Rice</name>
    <dbReference type="NCBI Taxonomy" id="4530"/>
    <lineage>
        <taxon>Eukaryota</taxon>
        <taxon>Viridiplantae</taxon>
        <taxon>Streptophyta</taxon>
        <taxon>Embryophyta</taxon>
        <taxon>Tracheophyta</taxon>
        <taxon>Spermatophyta</taxon>
        <taxon>Magnoliopsida</taxon>
        <taxon>Liliopsida</taxon>
        <taxon>Poales</taxon>
        <taxon>Poaceae</taxon>
        <taxon>BOP clade</taxon>
        <taxon>Oryzoideae</taxon>
        <taxon>Oryzeae</taxon>
        <taxon>Oryzinae</taxon>
        <taxon>Oryza</taxon>
    </lineage>
</organism>
<accession>P0C520</accession>
<accession>P15998</accession>
<accession>Q2F8Z9</accession>
<accession>Q2F952</accession>
<accession>Q7JAI5</accession>
<dbReference type="EMBL" id="DQ167807">
    <property type="protein sequence ID" value="AAZ99296.1"/>
    <property type="status" value="ALT_SEQ"/>
    <property type="molecule type" value="Genomic_DNA"/>
</dbReference>
<dbReference type="SMR" id="P0C520"/>
<dbReference type="ExpressionAtlas" id="P0C520">
    <property type="expression patterns" value="baseline and differential"/>
</dbReference>
<dbReference type="GO" id="GO:0005743">
    <property type="term" value="C:mitochondrial inner membrane"/>
    <property type="evidence" value="ECO:0007669"/>
    <property type="project" value="UniProtKB-SubCell"/>
</dbReference>
<dbReference type="GO" id="GO:0005739">
    <property type="term" value="C:mitochondrion"/>
    <property type="evidence" value="ECO:0000305"/>
    <property type="project" value="Gramene"/>
</dbReference>
<dbReference type="GO" id="GO:0045259">
    <property type="term" value="C:proton-transporting ATP synthase complex"/>
    <property type="evidence" value="ECO:0007669"/>
    <property type="project" value="UniProtKB-KW"/>
</dbReference>
<dbReference type="GO" id="GO:0043531">
    <property type="term" value="F:ADP binding"/>
    <property type="evidence" value="ECO:0007669"/>
    <property type="project" value="TreeGrafter"/>
</dbReference>
<dbReference type="GO" id="GO:0005524">
    <property type="term" value="F:ATP binding"/>
    <property type="evidence" value="ECO:0007669"/>
    <property type="project" value="UniProtKB-KW"/>
</dbReference>
<dbReference type="GO" id="GO:0046933">
    <property type="term" value="F:proton-transporting ATP synthase activity, rotational mechanism"/>
    <property type="evidence" value="ECO:0007669"/>
    <property type="project" value="InterPro"/>
</dbReference>
<dbReference type="CDD" id="cd18113">
    <property type="entry name" value="ATP-synt_F1_alpha_C"/>
    <property type="match status" value="1"/>
</dbReference>
<dbReference type="CDD" id="cd18116">
    <property type="entry name" value="ATP-synt_F1_alpha_N"/>
    <property type="match status" value="1"/>
</dbReference>
<dbReference type="CDD" id="cd01132">
    <property type="entry name" value="F1-ATPase_alpha_CD"/>
    <property type="match status" value="1"/>
</dbReference>
<dbReference type="FunFam" id="1.20.150.20:FF:000001">
    <property type="entry name" value="ATP synthase subunit alpha"/>
    <property type="match status" value="1"/>
</dbReference>
<dbReference type="FunFam" id="2.40.30.20:FF:000001">
    <property type="entry name" value="ATP synthase subunit alpha"/>
    <property type="match status" value="1"/>
</dbReference>
<dbReference type="FunFam" id="3.40.50.300:FF:002432">
    <property type="entry name" value="ATP synthase subunit alpha, mitochondrial"/>
    <property type="match status" value="1"/>
</dbReference>
<dbReference type="Gene3D" id="2.40.30.20">
    <property type="match status" value="1"/>
</dbReference>
<dbReference type="Gene3D" id="1.20.150.20">
    <property type="entry name" value="ATP synthase alpha/beta chain, C-terminal domain"/>
    <property type="match status" value="1"/>
</dbReference>
<dbReference type="Gene3D" id="3.40.50.300">
    <property type="entry name" value="P-loop containing nucleotide triphosphate hydrolases"/>
    <property type="match status" value="1"/>
</dbReference>
<dbReference type="HAMAP" id="MF_01346">
    <property type="entry name" value="ATP_synth_alpha_bact"/>
    <property type="match status" value="1"/>
</dbReference>
<dbReference type="InterPro" id="IPR023366">
    <property type="entry name" value="ATP_synth_asu-like_sf"/>
</dbReference>
<dbReference type="InterPro" id="IPR000793">
    <property type="entry name" value="ATP_synth_asu_C"/>
</dbReference>
<dbReference type="InterPro" id="IPR038376">
    <property type="entry name" value="ATP_synth_asu_C_sf"/>
</dbReference>
<dbReference type="InterPro" id="IPR033732">
    <property type="entry name" value="ATP_synth_F1_a_nt-bd_dom"/>
</dbReference>
<dbReference type="InterPro" id="IPR005294">
    <property type="entry name" value="ATP_synth_F1_asu"/>
</dbReference>
<dbReference type="InterPro" id="IPR020003">
    <property type="entry name" value="ATPase_a/bsu_AS"/>
</dbReference>
<dbReference type="InterPro" id="IPR004100">
    <property type="entry name" value="ATPase_F1/V1/A1_a/bsu_N"/>
</dbReference>
<dbReference type="InterPro" id="IPR036121">
    <property type="entry name" value="ATPase_F1/V1/A1_a/bsu_N_sf"/>
</dbReference>
<dbReference type="InterPro" id="IPR000194">
    <property type="entry name" value="ATPase_F1/V1/A1_a/bsu_nucl-bd"/>
</dbReference>
<dbReference type="InterPro" id="IPR027417">
    <property type="entry name" value="P-loop_NTPase"/>
</dbReference>
<dbReference type="NCBIfam" id="TIGR00962">
    <property type="entry name" value="atpA"/>
    <property type="match status" value="1"/>
</dbReference>
<dbReference type="NCBIfam" id="NF009884">
    <property type="entry name" value="PRK13343.1"/>
    <property type="match status" value="1"/>
</dbReference>
<dbReference type="PANTHER" id="PTHR48082">
    <property type="entry name" value="ATP SYNTHASE SUBUNIT ALPHA, MITOCHONDRIAL"/>
    <property type="match status" value="1"/>
</dbReference>
<dbReference type="PANTHER" id="PTHR48082:SF2">
    <property type="entry name" value="ATP SYNTHASE SUBUNIT ALPHA, MITOCHONDRIAL"/>
    <property type="match status" value="1"/>
</dbReference>
<dbReference type="Pfam" id="PF00006">
    <property type="entry name" value="ATP-synt_ab"/>
    <property type="match status" value="1"/>
</dbReference>
<dbReference type="Pfam" id="PF00306">
    <property type="entry name" value="ATP-synt_ab_C"/>
    <property type="match status" value="1"/>
</dbReference>
<dbReference type="Pfam" id="PF02874">
    <property type="entry name" value="ATP-synt_ab_N"/>
    <property type="match status" value="1"/>
</dbReference>
<dbReference type="PIRSF" id="PIRSF039088">
    <property type="entry name" value="F_ATPase_subunit_alpha"/>
    <property type="match status" value="1"/>
</dbReference>
<dbReference type="SUPFAM" id="SSF47917">
    <property type="entry name" value="C-terminal domain of alpha and beta subunits of F1 ATP synthase"/>
    <property type="match status" value="1"/>
</dbReference>
<dbReference type="SUPFAM" id="SSF50615">
    <property type="entry name" value="N-terminal domain of alpha and beta subunits of F1 ATP synthase"/>
    <property type="match status" value="1"/>
</dbReference>
<dbReference type="SUPFAM" id="SSF52540">
    <property type="entry name" value="P-loop containing nucleoside triphosphate hydrolases"/>
    <property type="match status" value="1"/>
</dbReference>
<dbReference type="PROSITE" id="PS00152">
    <property type="entry name" value="ATPASE_ALPHA_BETA"/>
    <property type="match status" value="1"/>
</dbReference>
<protein>
    <recommendedName>
        <fullName>ATP synthase subunit alpha, mitochondrial</fullName>
    </recommendedName>
</protein>
<feature type="chain" id="PRO_0000144403" description="ATP synthase subunit alpha, mitochondrial">
    <location>
        <begin position="1"/>
        <end position="509"/>
    </location>
</feature>
<feature type="binding site" evidence="1">
    <location>
        <begin position="171"/>
        <end position="178"/>
    </location>
    <ligand>
        <name>ATP</name>
        <dbReference type="ChEBI" id="CHEBI:30616"/>
    </ligand>
</feature>
<feature type="site" description="Required for activity" evidence="1">
    <location>
        <position position="373"/>
    </location>
</feature>
<comment type="function">
    <text evidence="1">Mitochondrial membrane ATP synthase (F(1)F(0) ATP synthase or Complex V) produces ATP from ADP in the presence of a proton gradient across the membrane which is generated by electron transport complexes of the respiratory chain. F-type ATPases consist of two structural domains, F(1) - containing the extramembraneous catalytic core, and F(0) - containing the membrane proton channel, linked together by a central stalk and a peripheral stalk. During catalysis, ATP synthesis in the catalytic domain of F(1) is coupled via a rotary mechanism of the central stalk subunits to proton translocation. Subunits alpha and beta form the catalytic core in F(1). Rotation of the central stalk against the surrounding alpha(3)beta(3) subunits leads to hydrolysis of ATP in three separate catalytic sites on the beta subunits. Subunit alpha does not bear the catalytic high-affinity ATP-binding sites (By similarity).</text>
</comment>
<comment type="subunit">
    <text>F-type ATPases have 2 components, CF(1) - the catalytic core - and CF(0) - the membrane proton channel. CF(1) has five subunits: alpha(3), beta(3), gamma(1), delta(1), epsilon(1). CF(0) has three main subunits: a, b and c.</text>
</comment>
<comment type="subcellular location">
    <subcellularLocation>
        <location>Mitochondrion</location>
    </subcellularLocation>
    <subcellularLocation>
        <location>Mitochondrion inner membrane</location>
    </subcellularLocation>
    <text>Peripheral membrane protein.</text>
</comment>
<comment type="RNA editing">
    <location>
        <position position="393" evidence="1"/>
    </location>
    <location>
        <position position="431" evidence="1"/>
    </location>
    <location>
        <position position="497" evidence="1"/>
    </location>
    <location>
        <position position="500" evidence="1"/>
    </location>
</comment>
<comment type="similarity">
    <text evidence="2">Belongs to the ATPase alpha/beta chains family.</text>
</comment>
<proteinExistence type="inferred from homology"/>
<keyword id="KW-0066">ATP synthesis</keyword>
<keyword id="KW-0067">ATP-binding</keyword>
<keyword id="KW-0139">CF(1)</keyword>
<keyword id="KW-0375">Hydrogen ion transport</keyword>
<keyword id="KW-0406">Ion transport</keyword>
<keyword id="KW-0472">Membrane</keyword>
<keyword id="KW-0496">Mitochondrion</keyword>
<keyword id="KW-0999">Mitochondrion inner membrane</keyword>
<keyword id="KW-0547">Nucleotide-binding</keyword>
<keyword id="KW-0691">RNA editing</keyword>
<keyword id="KW-0813">Transport</keyword>
<gene>
    <name type="primary">ATPA</name>
</gene>